<proteinExistence type="inferred from homology"/>
<sequence length="343" mass="36741">MQFIDHATICVKAGDGGDGIVAFRREKYVPAGGPSGGNGGRGGSVILVATEQLQTLLDFRYLRLFKAQDGERGGPKGMTGASADDLIIQVPCGTAVYDAETDECLGDLTSAGQTLQVAQGGKGGLGNQHFLSNSNRAPEHALPGLPGEERQLRLELKLLAEVGLIGLPNAGKSMLISVLSAAKPKIADYPFTTLVPNLGVVRRETGDGTVFADIPGLIEGAHRGAGLGHDFLRHIERTRLLIHLVDLTAEDPIADWRTIQAELKAYGRGLSDRPQILALNKIDAVLDEDLSFWQAEFQALTPVPLLCISSADRRGLDALLRLVWQWLDELDAAAELSETRVLN</sequence>
<feature type="chain" id="PRO_0000386332" description="GTPase Obg">
    <location>
        <begin position="1"/>
        <end position="343"/>
    </location>
</feature>
<feature type="domain" description="Obg" evidence="2">
    <location>
        <begin position="1"/>
        <end position="159"/>
    </location>
</feature>
<feature type="domain" description="OBG-type G" evidence="1">
    <location>
        <begin position="160"/>
        <end position="328"/>
    </location>
</feature>
<feature type="binding site" evidence="1">
    <location>
        <begin position="166"/>
        <end position="173"/>
    </location>
    <ligand>
        <name>GTP</name>
        <dbReference type="ChEBI" id="CHEBI:37565"/>
    </ligand>
</feature>
<feature type="binding site" evidence="1">
    <location>
        <position position="173"/>
    </location>
    <ligand>
        <name>Mg(2+)</name>
        <dbReference type="ChEBI" id="CHEBI:18420"/>
    </ligand>
</feature>
<feature type="binding site" evidence="1">
    <location>
        <begin position="191"/>
        <end position="195"/>
    </location>
    <ligand>
        <name>GTP</name>
        <dbReference type="ChEBI" id="CHEBI:37565"/>
    </ligand>
</feature>
<feature type="binding site" evidence="1">
    <location>
        <position position="193"/>
    </location>
    <ligand>
        <name>Mg(2+)</name>
        <dbReference type="ChEBI" id="CHEBI:18420"/>
    </ligand>
</feature>
<feature type="binding site" evidence="1">
    <location>
        <begin position="213"/>
        <end position="216"/>
    </location>
    <ligand>
        <name>GTP</name>
        <dbReference type="ChEBI" id="CHEBI:37565"/>
    </ligand>
</feature>
<feature type="binding site" evidence="1">
    <location>
        <begin position="280"/>
        <end position="283"/>
    </location>
    <ligand>
        <name>GTP</name>
        <dbReference type="ChEBI" id="CHEBI:37565"/>
    </ligand>
</feature>
<feature type="binding site" evidence="1">
    <location>
        <begin position="309"/>
        <end position="311"/>
    </location>
    <ligand>
        <name>GTP</name>
        <dbReference type="ChEBI" id="CHEBI:37565"/>
    </ligand>
</feature>
<protein>
    <recommendedName>
        <fullName evidence="1">GTPase Obg</fullName>
        <ecNumber evidence="1">3.6.5.-</ecNumber>
    </recommendedName>
    <alternativeName>
        <fullName evidence="1">GTP-binding protein Obg</fullName>
    </alternativeName>
</protein>
<evidence type="ECO:0000255" key="1">
    <source>
        <dbReference type="HAMAP-Rule" id="MF_01454"/>
    </source>
</evidence>
<evidence type="ECO:0000255" key="2">
    <source>
        <dbReference type="PROSITE-ProRule" id="PRU01231"/>
    </source>
</evidence>
<name>OBG_SYNP6</name>
<comment type="function">
    <text evidence="1">An essential GTPase which binds GTP, GDP and possibly (p)ppGpp with moderate affinity, with high nucleotide exchange rates and a fairly low GTP hydrolysis rate. Plays a role in control of the cell cycle, stress response, ribosome biogenesis and in those bacteria that undergo differentiation, in morphogenesis control.</text>
</comment>
<comment type="cofactor">
    <cofactor evidence="1">
        <name>Mg(2+)</name>
        <dbReference type="ChEBI" id="CHEBI:18420"/>
    </cofactor>
</comment>
<comment type="subunit">
    <text evidence="1">Monomer.</text>
</comment>
<comment type="subcellular location">
    <subcellularLocation>
        <location evidence="1">Cytoplasm</location>
    </subcellularLocation>
</comment>
<comment type="similarity">
    <text evidence="1">Belongs to the TRAFAC class OBG-HflX-like GTPase superfamily. OBG GTPase family.</text>
</comment>
<gene>
    <name evidence="1" type="primary">obg</name>
    <name type="ordered locus">syc0583_d</name>
</gene>
<keyword id="KW-0963">Cytoplasm</keyword>
<keyword id="KW-0342">GTP-binding</keyword>
<keyword id="KW-0378">Hydrolase</keyword>
<keyword id="KW-0460">Magnesium</keyword>
<keyword id="KW-0479">Metal-binding</keyword>
<keyword id="KW-0547">Nucleotide-binding</keyword>
<reference key="1">
    <citation type="journal article" date="2007" name="Photosyn. Res.">
        <title>Complete nucleotide sequence of the freshwater unicellular cyanobacterium Synechococcus elongatus PCC 6301 chromosome: gene content and organization.</title>
        <authorList>
            <person name="Sugita C."/>
            <person name="Ogata K."/>
            <person name="Shikata M."/>
            <person name="Jikuya H."/>
            <person name="Takano J."/>
            <person name="Furumichi M."/>
            <person name="Kanehisa M."/>
            <person name="Omata T."/>
            <person name="Sugiura M."/>
            <person name="Sugita M."/>
        </authorList>
    </citation>
    <scope>NUCLEOTIDE SEQUENCE [LARGE SCALE GENOMIC DNA]</scope>
    <source>
        <strain>ATCC 27144 / PCC 6301 / SAUG 1402/1</strain>
    </source>
</reference>
<organism>
    <name type="scientific">Synechococcus sp. (strain ATCC 27144 / PCC 6301 / SAUG 1402/1)</name>
    <name type="common">Anacystis nidulans</name>
    <dbReference type="NCBI Taxonomy" id="269084"/>
    <lineage>
        <taxon>Bacteria</taxon>
        <taxon>Bacillati</taxon>
        <taxon>Cyanobacteriota</taxon>
        <taxon>Cyanophyceae</taxon>
        <taxon>Synechococcales</taxon>
        <taxon>Synechococcaceae</taxon>
        <taxon>Synechococcus</taxon>
    </lineage>
</organism>
<dbReference type="EC" id="3.6.5.-" evidence="1"/>
<dbReference type="EMBL" id="AP008231">
    <property type="protein sequence ID" value="BAD78773.1"/>
    <property type="molecule type" value="Genomic_DNA"/>
</dbReference>
<dbReference type="SMR" id="Q5N4J6"/>
<dbReference type="KEGG" id="syc:syc0583_d"/>
<dbReference type="eggNOG" id="COG0536">
    <property type="taxonomic scope" value="Bacteria"/>
</dbReference>
<dbReference type="Proteomes" id="UP000001175">
    <property type="component" value="Chromosome"/>
</dbReference>
<dbReference type="GO" id="GO:0005737">
    <property type="term" value="C:cytoplasm"/>
    <property type="evidence" value="ECO:0007669"/>
    <property type="project" value="UniProtKB-SubCell"/>
</dbReference>
<dbReference type="GO" id="GO:0005525">
    <property type="term" value="F:GTP binding"/>
    <property type="evidence" value="ECO:0007669"/>
    <property type="project" value="UniProtKB-UniRule"/>
</dbReference>
<dbReference type="GO" id="GO:0003924">
    <property type="term" value="F:GTPase activity"/>
    <property type="evidence" value="ECO:0007669"/>
    <property type="project" value="UniProtKB-UniRule"/>
</dbReference>
<dbReference type="GO" id="GO:0000287">
    <property type="term" value="F:magnesium ion binding"/>
    <property type="evidence" value="ECO:0007669"/>
    <property type="project" value="InterPro"/>
</dbReference>
<dbReference type="GO" id="GO:0042254">
    <property type="term" value="P:ribosome biogenesis"/>
    <property type="evidence" value="ECO:0007669"/>
    <property type="project" value="UniProtKB-UniRule"/>
</dbReference>
<dbReference type="CDD" id="cd01898">
    <property type="entry name" value="Obg"/>
    <property type="match status" value="1"/>
</dbReference>
<dbReference type="FunFam" id="2.70.210.12:FF:000001">
    <property type="entry name" value="GTPase Obg"/>
    <property type="match status" value="1"/>
</dbReference>
<dbReference type="Gene3D" id="2.70.210.12">
    <property type="entry name" value="GTP1/OBG domain"/>
    <property type="match status" value="1"/>
</dbReference>
<dbReference type="Gene3D" id="3.40.50.300">
    <property type="entry name" value="P-loop containing nucleotide triphosphate hydrolases"/>
    <property type="match status" value="1"/>
</dbReference>
<dbReference type="HAMAP" id="MF_01454">
    <property type="entry name" value="GTPase_Obg"/>
    <property type="match status" value="1"/>
</dbReference>
<dbReference type="InterPro" id="IPR031167">
    <property type="entry name" value="G_OBG"/>
</dbReference>
<dbReference type="InterPro" id="IPR006073">
    <property type="entry name" value="GTP-bd"/>
</dbReference>
<dbReference type="InterPro" id="IPR014100">
    <property type="entry name" value="GTP-bd_Obg/CgtA"/>
</dbReference>
<dbReference type="InterPro" id="IPR006074">
    <property type="entry name" value="GTP1-OBG_CS"/>
</dbReference>
<dbReference type="InterPro" id="IPR006169">
    <property type="entry name" value="GTP1_OBG_dom"/>
</dbReference>
<dbReference type="InterPro" id="IPR036726">
    <property type="entry name" value="GTP1_OBG_dom_sf"/>
</dbReference>
<dbReference type="InterPro" id="IPR045086">
    <property type="entry name" value="OBG_GTPase"/>
</dbReference>
<dbReference type="InterPro" id="IPR027417">
    <property type="entry name" value="P-loop_NTPase"/>
</dbReference>
<dbReference type="NCBIfam" id="TIGR02729">
    <property type="entry name" value="Obg_CgtA"/>
    <property type="match status" value="1"/>
</dbReference>
<dbReference type="NCBIfam" id="NF008955">
    <property type="entry name" value="PRK12297.1"/>
    <property type="match status" value="1"/>
</dbReference>
<dbReference type="NCBIfam" id="NF008956">
    <property type="entry name" value="PRK12299.1"/>
    <property type="match status" value="1"/>
</dbReference>
<dbReference type="PANTHER" id="PTHR11702">
    <property type="entry name" value="DEVELOPMENTALLY REGULATED GTP-BINDING PROTEIN-RELATED"/>
    <property type="match status" value="1"/>
</dbReference>
<dbReference type="PANTHER" id="PTHR11702:SF31">
    <property type="entry name" value="MITOCHONDRIAL RIBOSOME-ASSOCIATED GTPASE 2"/>
    <property type="match status" value="1"/>
</dbReference>
<dbReference type="Pfam" id="PF01018">
    <property type="entry name" value="GTP1_OBG"/>
    <property type="match status" value="1"/>
</dbReference>
<dbReference type="Pfam" id="PF01926">
    <property type="entry name" value="MMR_HSR1"/>
    <property type="match status" value="1"/>
</dbReference>
<dbReference type="PIRSF" id="PIRSF002401">
    <property type="entry name" value="GTP_bd_Obg/CgtA"/>
    <property type="match status" value="1"/>
</dbReference>
<dbReference type="PRINTS" id="PR00326">
    <property type="entry name" value="GTP1OBG"/>
</dbReference>
<dbReference type="SUPFAM" id="SSF82051">
    <property type="entry name" value="Obg GTP-binding protein N-terminal domain"/>
    <property type="match status" value="1"/>
</dbReference>
<dbReference type="SUPFAM" id="SSF52540">
    <property type="entry name" value="P-loop containing nucleoside triphosphate hydrolases"/>
    <property type="match status" value="1"/>
</dbReference>
<dbReference type="PROSITE" id="PS51710">
    <property type="entry name" value="G_OBG"/>
    <property type="match status" value="1"/>
</dbReference>
<dbReference type="PROSITE" id="PS00905">
    <property type="entry name" value="GTP1_OBG"/>
    <property type="match status" value="1"/>
</dbReference>
<dbReference type="PROSITE" id="PS51883">
    <property type="entry name" value="OBG"/>
    <property type="match status" value="1"/>
</dbReference>
<accession>Q5N4J6</accession>